<proteinExistence type="evidence at protein level"/>
<reference evidence="4" key="1">
    <citation type="journal article" date="2009" name="BMC Evol. Biol.">
        <title>A proteomic approach for studying insect phylogeny: CAPA peptides of ancient insect taxa (Dictyoptera, Blattoptera) as a test case.</title>
        <authorList>
            <person name="Roth S."/>
            <person name="Fromm B."/>
            <person name="Gaede G."/>
            <person name="Predel R."/>
        </authorList>
    </citation>
    <scope>PROTEIN SEQUENCE</scope>
    <scope>AMIDATION AT THR-11</scope>
    <source>
        <tissue evidence="2">Abdominal perisympathetic organs</tissue>
    </source>
</reference>
<comment type="function">
    <text evidence="4">Mediates visceral muscle contractile activity (myotropic activity).</text>
</comment>
<comment type="subcellular location">
    <subcellularLocation>
        <location evidence="4">Secreted</location>
    </subcellularLocation>
</comment>
<comment type="similarity">
    <text evidence="1">Belongs to the periviscerokinin family.</text>
</comment>
<name>PVK1_LUCGR</name>
<sequence>GSTGLIPFGRT</sequence>
<feature type="peptide" id="PRO_0000378749" description="Periviscerokinin-1" evidence="2">
    <location>
        <begin position="1"/>
        <end position="11"/>
    </location>
</feature>
<feature type="modified residue" description="Threonine amide" evidence="2">
    <location>
        <position position="11"/>
    </location>
</feature>
<dbReference type="GO" id="GO:0005576">
    <property type="term" value="C:extracellular region"/>
    <property type="evidence" value="ECO:0007669"/>
    <property type="project" value="UniProtKB-SubCell"/>
</dbReference>
<dbReference type="GO" id="GO:0007218">
    <property type="term" value="P:neuropeptide signaling pathway"/>
    <property type="evidence" value="ECO:0007669"/>
    <property type="project" value="UniProtKB-KW"/>
</dbReference>
<dbReference type="InterPro" id="IPR013231">
    <property type="entry name" value="Periviscerokinin"/>
</dbReference>
<dbReference type="Pfam" id="PF08259">
    <property type="entry name" value="Periviscerokin"/>
    <property type="match status" value="1"/>
</dbReference>
<keyword id="KW-0027">Amidation</keyword>
<keyword id="KW-0903">Direct protein sequencing</keyword>
<keyword id="KW-0527">Neuropeptide</keyword>
<keyword id="KW-0964">Secreted</keyword>
<protein>
    <recommendedName>
        <fullName evidence="3">Periviscerokinin-1</fullName>
        <shortName evidence="3">LucGr-PVK-1</shortName>
    </recommendedName>
</protein>
<organism>
    <name type="scientific">Lucihormetica grossei</name>
    <name type="common">Cockroach</name>
    <dbReference type="NCBI Taxonomy" id="521513"/>
    <lineage>
        <taxon>Eukaryota</taxon>
        <taxon>Metazoa</taxon>
        <taxon>Ecdysozoa</taxon>
        <taxon>Arthropoda</taxon>
        <taxon>Hexapoda</taxon>
        <taxon>Insecta</taxon>
        <taxon>Pterygota</taxon>
        <taxon>Neoptera</taxon>
        <taxon>Polyneoptera</taxon>
        <taxon>Dictyoptera</taxon>
        <taxon>Blattodea</taxon>
        <taxon>Blaberoidea</taxon>
        <taxon>Blaberidae</taxon>
        <taxon>Blaberinae</taxon>
        <taxon>Lucihormetica</taxon>
    </lineage>
</organism>
<accession>P85660</accession>
<evidence type="ECO:0000255" key="1"/>
<evidence type="ECO:0000269" key="2">
    <source>
    </source>
</evidence>
<evidence type="ECO:0000303" key="3">
    <source>
    </source>
</evidence>
<evidence type="ECO:0000305" key="4"/>